<proteinExistence type="inferred from homology"/>
<evidence type="ECO:0000255" key="1">
    <source>
        <dbReference type="HAMAP-Rule" id="MF_00128"/>
    </source>
</evidence>
<accession>B5RDD6</accession>
<sequence>MSALVYFSSSSENTHRFMQRLGLPATRIPLNERERIQVDEPYILVVPSYGGGMAGAVPRQVIRFLNDEHNRARIRGVIASGNRNFGDAWGCAGDVIAQKCGVPWLYRFELMGTQRDIDNVRKGVNEFWQQLSRSA</sequence>
<reference key="1">
    <citation type="journal article" date="2008" name="Genome Res.">
        <title>Comparative genome analysis of Salmonella enteritidis PT4 and Salmonella gallinarum 287/91 provides insights into evolutionary and host adaptation pathways.</title>
        <authorList>
            <person name="Thomson N.R."/>
            <person name="Clayton D.J."/>
            <person name="Windhorst D."/>
            <person name="Vernikos G."/>
            <person name="Davidson S."/>
            <person name="Churcher C."/>
            <person name="Quail M.A."/>
            <person name="Stevens M."/>
            <person name="Jones M.A."/>
            <person name="Watson M."/>
            <person name="Barron A."/>
            <person name="Layton A."/>
            <person name="Pickard D."/>
            <person name="Kingsley R.A."/>
            <person name="Bignell A."/>
            <person name="Clark L."/>
            <person name="Harris B."/>
            <person name="Ormond D."/>
            <person name="Abdellah Z."/>
            <person name="Brooks K."/>
            <person name="Cherevach I."/>
            <person name="Chillingworth T."/>
            <person name="Woodward J."/>
            <person name="Norberczak H."/>
            <person name="Lord A."/>
            <person name="Arrowsmith C."/>
            <person name="Jagels K."/>
            <person name="Moule S."/>
            <person name="Mungall K."/>
            <person name="Saunders M."/>
            <person name="Whitehead S."/>
            <person name="Chabalgoity J.A."/>
            <person name="Maskell D."/>
            <person name="Humphreys T."/>
            <person name="Roberts M."/>
            <person name="Barrow P.A."/>
            <person name="Dougan G."/>
            <person name="Parkhill J."/>
        </authorList>
    </citation>
    <scope>NUCLEOTIDE SEQUENCE [LARGE SCALE GENOMIC DNA]</scope>
    <source>
        <strain>287/91 / NCTC 13346</strain>
    </source>
</reference>
<dbReference type="EMBL" id="AM933173">
    <property type="protein sequence ID" value="CAR38523.1"/>
    <property type="molecule type" value="Genomic_DNA"/>
</dbReference>
<dbReference type="RefSeq" id="WP_001275407.1">
    <property type="nucleotide sequence ID" value="NC_011274.1"/>
</dbReference>
<dbReference type="SMR" id="B5RDD6"/>
<dbReference type="KEGG" id="seg:SG2713"/>
<dbReference type="HOGENOM" id="CLU_114845_0_0_6"/>
<dbReference type="Proteomes" id="UP000008321">
    <property type="component" value="Chromosome"/>
</dbReference>
<dbReference type="GO" id="GO:0010181">
    <property type="term" value="F:FMN binding"/>
    <property type="evidence" value="ECO:0007669"/>
    <property type="project" value="InterPro"/>
</dbReference>
<dbReference type="GO" id="GO:0036211">
    <property type="term" value="P:protein modification process"/>
    <property type="evidence" value="ECO:0007669"/>
    <property type="project" value="InterPro"/>
</dbReference>
<dbReference type="FunFam" id="3.40.50.360:FF:000005">
    <property type="entry name" value="Protein NrdI"/>
    <property type="match status" value="1"/>
</dbReference>
<dbReference type="Gene3D" id="3.40.50.360">
    <property type="match status" value="1"/>
</dbReference>
<dbReference type="HAMAP" id="MF_00128">
    <property type="entry name" value="NrdI"/>
    <property type="match status" value="1"/>
</dbReference>
<dbReference type="InterPro" id="IPR029039">
    <property type="entry name" value="Flavoprotein-like_sf"/>
</dbReference>
<dbReference type="InterPro" id="IPR020852">
    <property type="entry name" value="RNR_Ib_NrdI_bac"/>
</dbReference>
<dbReference type="InterPro" id="IPR004465">
    <property type="entry name" value="RNR_NrdI"/>
</dbReference>
<dbReference type="NCBIfam" id="TIGR00333">
    <property type="entry name" value="nrdI"/>
    <property type="match status" value="1"/>
</dbReference>
<dbReference type="PANTHER" id="PTHR37297">
    <property type="entry name" value="PROTEIN NRDI"/>
    <property type="match status" value="1"/>
</dbReference>
<dbReference type="PANTHER" id="PTHR37297:SF1">
    <property type="entry name" value="PROTEIN NRDI"/>
    <property type="match status" value="1"/>
</dbReference>
<dbReference type="Pfam" id="PF07972">
    <property type="entry name" value="Flavodoxin_NdrI"/>
    <property type="match status" value="1"/>
</dbReference>
<dbReference type="PIRSF" id="PIRSF005087">
    <property type="entry name" value="NrdI"/>
    <property type="match status" value="1"/>
</dbReference>
<dbReference type="SUPFAM" id="SSF52218">
    <property type="entry name" value="Flavoproteins"/>
    <property type="match status" value="1"/>
</dbReference>
<feature type="chain" id="PRO_1000095630" description="Protein NrdI">
    <location>
        <begin position="1"/>
        <end position="135"/>
    </location>
</feature>
<name>NRDI_SALG2</name>
<gene>
    <name evidence="1" type="primary">nrdI</name>
    <name type="ordered locus">SG2713</name>
</gene>
<organism>
    <name type="scientific">Salmonella gallinarum (strain 287/91 / NCTC 13346)</name>
    <dbReference type="NCBI Taxonomy" id="550538"/>
    <lineage>
        <taxon>Bacteria</taxon>
        <taxon>Pseudomonadati</taxon>
        <taxon>Pseudomonadota</taxon>
        <taxon>Gammaproteobacteria</taxon>
        <taxon>Enterobacterales</taxon>
        <taxon>Enterobacteriaceae</taxon>
        <taxon>Salmonella</taxon>
    </lineage>
</organism>
<comment type="function">
    <text evidence="1">Probably involved in ribonucleotide reductase function.</text>
</comment>
<comment type="similarity">
    <text evidence="1">Belongs to the NrdI family.</text>
</comment>
<protein>
    <recommendedName>
        <fullName evidence="1">Protein NrdI</fullName>
    </recommendedName>
</protein>